<keyword id="KW-0687">Ribonucleoprotein</keyword>
<keyword id="KW-0689">Ribosomal protein</keyword>
<proteinExistence type="inferred from homology"/>
<protein>
    <recommendedName>
        <fullName evidence="1">Large ribosomal subunit protein uL13</fullName>
    </recommendedName>
    <alternativeName>
        <fullName evidence="2">50S ribosomal protein L13</fullName>
    </alternativeName>
</protein>
<dbReference type="EMBL" id="AE008923">
    <property type="protein sequence ID" value="AAM35378.1"/>
    <property type="molecule type" value="Genomic_DNA"/>
</dbReference>
<dbReference type="RefSeq" id="WP_003483082.1">
    <property type="nucleotide sequence ID" value="NC_003919.1"/>
</dbReference>
<dbReference type="SMR" id="Q8NL21"/>
<dbReference type="GeneID" id="97508876"/>
<dbReference type="KEGG" id="xac:XAC0487"/>
<dbReference type="eggNOG" id="COG0102">
    <property type="taxonomic scope" value="Bacteria"/>
</dbReference>
<dbReference type="HOGENOM" id="CLU_082184_2_2_6"/>
<dbReference type="Proteomes" id="UP000000576">
    <property type="component" value="Chromosome"/>
</dbReference>
<dbReference type="GO" id="GO:0022625">
    <property type="term" value="C:cytosolic large ribosomal subunit"/>
    <property type="evidence" value="ECO:0007669"/>
    <property type="project" value="TreeGrafter"/>
</dbReference>
<dbReference type="GO" id="GO:0003729">
    <property type="term" value="F:mRNA binding"/>
    <property type="evidence" value="ECO:0007669"/>
    <property type="project" value="TreeGrafter"/>
</dbReference>
<dbReference type="GO" id="GO:0003735">
    <property type="term" value="F:structural constituent of ribosome"/>
    <property type="evidence" value="ECO:0007669"/>
    <property type="project" value="InterPro"/>
</dbReference>
<dbReference type="GO" id="GO:0017148">
    <property type="term" value="P:negative regulation of translation"/>
    <property type="evidence" value="ECO:0007669"/>
    <property type="project" value="TreeGrafter"/>
</dbReference>
<dbReference type="GO" id="GO:0006412">
    <property type="term" value="P:translation"/>
    <property type="evidence" value="ECO:0007669"/>
    <property type="project" value="UniProtKB-UniRule"/>
</dbReference>
<dbReference type="CDD" id="cd00392">
    <property type="entry name" value="Ribosomal_L13"/>
    <property type="match status" value="1"/>
</dbReference>
<dbReference type="FunFam" id="3.90.1180.10:FF:000001">
    <property type="entry name" value="50S ribosomal protein L13"/>
    <property type="match status" value="1"/>
</dbReference>
<dbReference type="Gene3D" id="3.90.1180.10">
    <property type="entry name" value="Ribosomal protein L13"/>
    <property type="match status" value="1"/>
</dbReference>
<dbReference type="HAMAP" id="MF_01366">
    <property type="entry name" value="Ribosomal_uL13"/>
    <property type="match status" value="1"/>
</dbReference>
<dbReference type="InterPro" id="IPR005822">
    <property type="entry name" value="Ribosomal_uL13"/>
</dbReference>
<dbReference type="InterPro" id="IPR005823">
    <property type="entry name" value="Ribosomal_uL13_bac-type"/>
</dbReference>
<dbReference type="InterPro" id="IPR023563">
    <property type="entry name" value="Ribosomal_uL13_CS"/>
</dbReference>
<dbReference type="InterPro" id="IPR036899">
    <property type="entry name" value="Ribosomal_uL13_sf"/>
</dbReference>
<dbReference type="NCBIfam" id="TIGR01066">
    <property type="entry name" value="rplM_bact"/>
    <property type="match status" value="1"/>
</dbReference>
<dbReference type="PANTHER" id="PTHR11545:SF2">
    <property type="entry name" value="LARGE RIBOSOMAL SUBUNIT PROTEIN UL13M"/>
    <property type="match status" value="1"/>
</dbReference>
<dbReference type="PANTHER" id="PTHR11545">
    <property type="entry name" value="RIBOSOMAL PROTEIN L13"/>
    <property type="match status" value="1"/>
</dbReference>
<dbReference type="Pfam" id="PF00572">
    <property type="entry name" value="Ribosomal_L13"/>
    <property type="match status" value="1"/>
</dbReference>
<dbReference type="PIRSF" id="PIRSF002181">
    <property type="entry name" value="Ribosomal_L13"/>
    <property type="match status" value="1"/>
</dbReference>
<dbReference type="SUPFAM" id="SSF52161">
    <property type="entry name" value="Ribosomal protein L13"/>
    <property type="match status" value="1"/>
</dbReference>
<dbReference type="PROSITE" id="PS00783">
    <property type="entry name" value="RIBOSOMAL_L13"/>
    <property type="match status" value="1"/>
</dbReference>
<evidence type="ECO:0000255" key="1">
    <source>
        <dbReference type="HAMAP-Rule" id="MF_01366"/>
    </source>
</evidence>
<evidence type="ECO:0000305" key="2"/>
<sequence>MTTFTAKSETVQRDWYLVDAAGKTLGRLSTELARRLRGKHKPVYTPHVDTGDYLVVINAEKIVVTGNKLKDKKYHRFTGYIGNLKTESLEQALQRHPERVIEIAVKGMLPKGPLGRTMYRKLKVYSGAEHPHAAQQPQVLDI</sequence>
<feature type="chain" id="PRO_0000261826" description="Large ribosomal subunit protein uL13">
    <location>
        <begin position="1"/>
        <end position="142"/>
    </location>
</feature>
<reference key="1">
    <citation type="journal article" date="2002" name="Nature">
        <title>Comparison of the genomes of two Xanthomonas pathogens with differing host specificities.</title>
        <authorList>
            <person name="da Silva A.C.R."/>
            <person name="Ferro J.A."/>
            <person name="Reinach F.C."/>
            <person name="Farah C.S."/>
            <person name="Furlan L.R."/>
            <person name="Quaggio R.B."/>
            <person name="Monteiro-Vitorello C.B."/>
            <person name="Van Sluys M.A."/>
            <person name="Almeida N.F. Jr."/>
            <person name="Alves L.M.C."/>
            <person name="do Amaral A.M."/>
            <person name="Bertolini M.C."/>
            <person name="Camargo L.E.A."/>
            <person name="Camarotte G."/>
            <person name="Cannavan F."/>
            <person name="Cardozo J."/>
            <person name="Chambergo F."/>
            <person name="Ciapina L.P."/>
            <person name="Cicarelli R.M.B."/>
            <person name="Coutinho L.L."/>
            <person name="Cursino-Santos J.R."/>
            <person name="El-Dorry H."/>
            <person name="Faria J.B."/>
            <person name="Ferreira A.J.S."/>
            <person name="Ferreira R.C.C."/>
            <person name="Ferro M.I.T."/>
            <person name="Formighieri E.F."/>
            <person name="Franco M.C."/>
            <person name="Greggio C.C."/>
            <person name="Gruber A."/>
            <person name="Katsuyama A.M."/>
            <person name="Kishi L.T."/>
            <person name="Leite R.P."/>
            <person name="Lemos E.G.M."/>
            <person name="Lemos M.V.F."/>
            <person name="Locali E.C."/>
            <person name="Machado M.A."/>
            <person name="Madeira A.M.B.N."/>
            <person name="Martinez-Rossi N.M."/>
            <person name="Martins E.C."/>
            <person name="Meidanis J."/>
            <person name="Menck C.F.M."/>
            <person name="Miyaki C.Y."/>
            <person name="Moon D.H."/>
            <person name="Moreira L.M."/>
            <person name="Novo M.T.M."/>
            <person name="Okura V.K."/>
            <person name="Oliveira M.C."/>
            <person name="Oliveira V.R."/>
            <person name="Pereira H.A."/>
            <person name="Rossi A."/>
            <person name="Sena J.A.D."/>
            <person name="Silva C."/>
            <person name="de Souza R.F."/>
            <person name="Spinola L.A.F."/>
            <person name="Takita M.A."/>
            <person name="Tamura R.E."/>
            <person name="Teixeira E.C."/>
            <person name="Tezza R.I.D."/>
            <person name="Trindade dos Santos M."/>
            <person name="Truffi D."/>
            <person name="Tsai S.M."/>
            <person name="White F.F."/>
            <person name="Setubal J.C."/>
            <person name="Kitajima J.P."/>
        </authorList>
    </citation>
    <scope>NUCLEOTIDE SEQUENCE [LARGE SCALE GENOMIC DNA]</scope>
    <source>
        <strain>306</strain>
    </source>
</reference>
<organism>
    <name type="scientific">Xanthomonas axonopodis pv. citri (strain 306)</name>
    <dbReference type="NCBI Taxonomy" id="190486"/>
    <lineage>
        <taxon>Bacteria</taxon>
        <taxon>Pseudomonadati</taxon>
        <taxon>Pseudomonadota</taxon>
        <taxon>Gammaproteobacteria</taxon>
        <taxon>Lysobacterales</taxon>
        <taxon>Lysobacteraceae</taxon>
        <taxon>Xanthomonas</taxon>
    </lineage>
</organism>
<accession>Q8NL21</accession>
<gene>
    <name evidence="1" type="primary">rplM</name>
    <name type="ordered locus">XAC0487</name>
</gene>
<comment type="function">
    <text evidence="1">This protein is one of the early assembly proteins of the 50S ribosomal subunit, although it is not seen to bind rRNA by itself. It is important during the early stages of 50S assembly.</text>
</comment>
<comment type="subunit">
    <text evidence="1">Part of the 50S ribosomal subunit.</text>
</comment>
<comment type="similarity">
    <text evidence="1">Belongs to the universal ribosomal protein uL13 family.</text>
</comment>
<name>RL13_XANAC</name>